<dbReference type="EMBL" id="CP000087">
    <property type="protein sequence ID" value="ABE05140.1"/>
    <property type="molecule type" value="Genomic_DNA"/>
</dbReference>
<dbReference type="RefSeq" id="WP_011477718.1">
    <property type="nucleotide sequence ID" value="NC_007940.1"/>
</dbReference>
<dbReference type="SMR" id="Q1RHM4"/>
<dbReference type="KEGG" id="rbe:RBE_1059"/>
<dbReference type="eggNOG" id="COG0090">
    <property type="taxonomic scope" value="Bacteria"/>
</dbReference>
<dbReference type="HOGENOM" id="CLU_036235_2_1_5"/>
<dbReference type="OrthoDB" id="9778722at2"/>
<dbReference type="Proteomes" id="UP000001951">
    <property type="component" value="Chromosome"/>
</dbReference>
<dbReference type="GO" id="GO:0015934">
    <property type="term" value="C:large ribosomal subunit"/>
    <property type="evidence" value="ECO:0007669"/>
    <property type="project" value="InterPro"/>
</dbReference>
<dbReference type="GO" id="GO:0019843">
    <property type="term" value="F:rRNA binding"/>
    <property type="evidence" value="ECO:0007669"/>
    <property type="project" value="UniProtKB-UniRule"/>
</dbReference>
<dbReference type="GO" id="GO:0003735">
    <property type="term" value="F:structural constituent of ribosome"/>
    <property type="evidence" value="ECO:0007669"/>
    <property type="project" value="InterPro"/>
</dbReference>
<dbReference type="GO" id="GO:0016740">
    <property type="term" value="F:transferase activity"/>
    <property type="evidence" value="ECO:0007669"/>
    <property type="project" value="InterPro"/>
</dbReference>
<dbReference type="GO" id="GO:0006412">
    <property type="term" value="P:translation"/>
    <property type="evidence" value="ECO:0007669"/>
    <property type="project" value="UniProtKB-UniRule"/>
</dbReference>
<dbReference type="FunFam" id="2.30.30.30:FF:000001">
    <property type="entry name" value="50S ribosomal protein L2"/>
    <property type="match status" value="1"/>
</dbReference>
<dbReference type="FunFam" id="2.40.50.140:FF:000003">
    <property type="entry name" value="50S ribosomal protein L2"/>
    <property type="match status" value="1"/>
</dbReference>
<dbReference type="FunFam" id="4.10.950.10:FF:000001">
    <property type="entry name" value="50S ribosomal protein L2"/>
    <property type="match status" value="1"/>
</dbReference>
<dbReference type="Gene3D" id="2.30.30.30">
    <property type="match status" value="1"/>
</dbReference>
<dbReference type="Gene3D" id="2.40.50.140">
    <property type="entry name" value="Nucleic acid-binding proteins"/>
    <property type="match status" value="1"/>
</dbReference>
<dbReference type="Gene3D" id="4.10.950.10">
    <property type="entry name" value="Ribosomal protein L2, domain 3"/>
    <property type="match status" value="1"/>
</dbReference>
<dbReference type="HAMAP" id="MF_01320_B">
    <property type="entry name" value="Ribosomal_uL2_B"/>
    <property type="match status" value="1"/>
</dbReference>
<dbReference type="InterPro" id="IPR012340">
    <property type="entry name" value="NA-bd_OB-fold"/>
</dbReference>
<dbReference type="InterPro" id="IPR014722">
    <property type="entry name" value="Rib_uL2_dom2"/>
</dbReference>
<dbReference type="InterPro" id="IPR002171">
    <property type="entry name" value="Ribosomal_uL2"/>
</dbReference>
<dbReference type="InterPro" id="IPR005880">
    <property type="entry name" value="Ribosomal_uL2_bac/org-type"/>
</dbReference>
<dbReference type="InterPro" id="IPR022669">
    <property type="entry name" value="Ribosomal_uL2_C"/>
</dbReference>
<dbReference type="InterPro" id="IPR022671">
    <property type="entry name" value="Ribosomal_uL2_CS"/>
</dbReference>
<dbReference type="InterPro" id="IPR014726">
    <property type="entry name" value="Ribosomal_uL2_dom3"/>
</dbReference>
<dbReference type="InterPro" id="IPR022666">
    <property type="entry name" value="Ribosomal_uL2_RNA-bd_dom"/>
</dbReference>
<dbReference type="InterPro" id="IPR008991">
    <property type="entry name" value="Translation_prot_SH3-like_sf"/>
</dbReference>
<dbReference type="NCBIfam" id="TIGR01171">
    <property type="entry name" value="rplB_bact"/>
    <property type="match status" value="1"/>
</dbReference>
<dbReference type="PANTHER" id="PTHR13691:SF5">
    <property type="entry name" value="LARGE RIBOSOMAL SUBUNIT PROTEIN UL2M"/>
    <property type="match status" value="1"/>
</dbReference>
<dbReference type="PANTHER" id="PTHR13691">
    <property type="entry name" value="RIBOSOMAL PROTEIN L2"/>
    <property type="match status" value="1"/>
</dbReference>
<dbReference type="Pfam" id="PF00181">
    <property type="entry name" value="Ribosomal_L2"/>
    <property type="match status" value="1"/>
</dbReference>
<dbReference type="Pfam" id="PF03947">
    <property type="entry name" value="Ribosomal_L2_C"/>
    <property type="match status" value="1"/>
</dbReference>
<dbReference type="PIRSF" id="PIRSF002158">
    <property type="entry name" value="Ribosomal_L2"/>
    <property type="match status" value="1"/>
</dbReference>
<dbReference type="SMART" id="SM01383">
    <property type="entry name" value="Ribosomal_L2"/>
    <property type="match status" value="1"/>
</dbReference>
<dbReference type="SMART" id="SM01382">
    <property type="entry name" value="Ribosomal_L2_C"/>
    <property type="match status" value="1"/>
</dbReference>
<dbReference type="SUPFAM" id="SSF50249">
    <property type="entry name" value="Nucleic acid-binding proteins"/>
    <property type="match status" value="1"/>
</dbReference>
<dbReference type="SUPFAM" id="SSF50104">
    <property type="entry name" value="Translation proteins SH3-like domain"/>
    <property type="match status" value="1"/>
</dbReference>
<dbReference type="PROSITE" id="PS00467">
    <property type="entry name" value="RIBOSOMAL_L2"/>
    <property type="match status" value="1"/>
</dbReference>
<protein>
    <recommendedName>
        <fullName evidence="1">Large ribosomal subunit protein uL2</fullName>
    </recommendedName>
    <alternativeName>
        <fullName evidence="3">50S ribosomal protein L2</fullName>
    </alternativeName>
</protein>
<keyword id="KW-0687">Ribonucleoprotein</keyword>
<keyword id="KW-0689">Ribosomal protein</keyword>
<keyword id="KW-0694">RNA-binding</keyword>
<keyword id="KW-0699">rRNA-binding</keyword>
<name>RL2_RICBR</name>
<accession>Q1RHM4</accession>
<feature type="chain" id="PRO_0000272392" description="Large ribosomal subunit protein uL2">
    <location>
        <begin position="1"/>
        <end position="273"/>
    </location>
</feature>
<feature type="region of interest" description="Disordered" evidence="2">
    <location>
        <begin position="228"/>
        <end position="273"/>
    </location>
</feature>
<feature type="compositionally biased region" description="Basic residues" evidence="2">
    <location>
        <begin position="254"/>
        <end position="273"/>
    </location>
</feature>
<organism>
    <name type="scientific">Rickettsia bellii (strain RML369-C)</name>
    <dbReference type="NCBI Taxonomy" id="336407"/>
    <lineage>
        <taxon>Bacteria</taxon>
        <taxon>Pseudomonadati</taxon>
        <taxon>Pseudomonadota</taxon>
        <taxon>Alphaproteobacteria</taxon>
        <taxon>Rickettsiales</taxon>
        <taxon>Rickettsiaceae</taxon>
        <taxon>Rickettsieae</taxon>
        <taxon>Rickettsia</taxon>
        <taxon>belli group</taxon>
    </lineage>
</organism>
<reference key="1">
    <citation type="journal article" date="2006" name="PLoS Genet.">
        <title>Genome sequence of Rickettsia bellii illuminates the role of amoebae in gene exchanges between intracellular pathogens.</title>
        <authorList>
            <person name="Ogata H."/>
            <person name="La Scola B."/>
            <person name="Audic S."/>
            <person name="Renesto P."/>
            <person name="Blanc G."/>
            <person name="Robert C."/>
            <person name="Fournier P.-E."/>
            <person name="Claverie J.-M."/>
            <person name="Raoult D."/>
        </authorList>
    </citation>
    <scope>NUCLEOTIDE SEQUENCE [LARGE SCALE GENOMIC DNA]</scope>
    <source>
        <strain>RML369-C</strain>
    </source>
</reference>
<evidence type="ECO:0000255" key="1">
    <source>
        <dbReference type="HAMAP-Rule" id="MF_01320"/>
    </source>
</evidence>
<evidence type="ECO:0000256" key="2">
    <source>
        <dbReference type="SAM" id="MobiDB-lite"/>
    </source>
</evidence>
<evidence type="ECO:0000305" key="3"/>
<gene>
    <name evidence="1" type="primary">rplB</name>
    <name type="ordered locus">RBE_1059</name>
</gene>
<sequence length="273" mass="30267">MALKSFNPITPSLRELVQVDRTSLWKGRPFKALTKGISKTGGRNNQGRITSWQRGGGHKRLYRVIDFKRNKLDISAIVERIEYDPNRTAFIALIKYEDGEHAYILAPQKLVVGDKIISSKDADIKIGNCLPLRYIPIGTTLHNVEMKVGKGGQIARSAGTSVDLVGKDSGYAQIKLKSGEFRLVPLDCMATIGTVSNPDQKNINLGKAGRNRWLGWRPHVRGVAMNPVDHPHGGGEGKTSGGRHPVTPWGFPTKGKKTRKNKRTSKFIIKKRK</sequence>
<proteinExistence type="inferred from homology"/>
<comment type="function">
    <text evidence="1">One of the primary rRNA binding proteins. Required for association of the 30S and 50S subunits to form the 70S ribosome, for tRNA binding and peptide bond formation. It has been suggested to have peptidyltransferase activity; this is somewhat controversial. Makes several contacts with the 16S rRNA in the 70S ribosome.</text>
</comment>
<comment type="subunit">
    <text evidence="1">Part of the 50S ribosomal subunit. Forms a bridge to the 30S subunit in the 70S ribosome.</text>
</comment>
<comment type="similarity">
    <text evidence="1">Belongs to the universal ribosomal protein uL2 family.</text>
</comment>